<accession>Q601K8</accession>
<dbReference type="EMBL" id="AE017332">
    <property type="protein sequence ID" value="AAV27450.1"/>
    <property type="molecule type" value="Genomic_DNA"/>
</dbReference>
<dbReference type="RefSeq" id="WP_011206031.1">
    <property type="nucleotide sequence ID" value="NC_006360.1"/>
</dbReference>
<dbReference type="SMR" id="Q601K8"/>
<dbReference type="GeneID" id="41334487"/>
<dbReference type="KEGG" id="mhy:mhp194"/>
<dbReference type="eggNOG" id="COG0092">
    <property type="taxonomic scope" value="Bacteria"/>
</dbReference>
<dbReference type="HOGENOM" id="CLU_058591_0_2_14"/>
<dbReference type="PhylomeDB" id="Q601K8"/>
<dbReference type="Proteomes" id="UP000006822">
    <property type="component" value="Chromosome"/>
</dbReference>
<dbReference type="GO" id="GO:0022627">
    <property type="term" value="C:cytosolic small ribosomal subunit"/>
    <property type="evidence" value="ECO:0007669"/>
    <property type="project" value="TreeGrafter"/>
</dbReference>
<dbReference type="GO" id="GO:0003729">
    <property type="term" value="F:mRNA binding"/>
    <property type="evidence" value="ECO:0007669"/>
    <property type="project" value="UniProtKB-UniRule"/>
</dbReference>
<dbReference type="GO" id="GO:0019843">
    <property type="term" value="F:rRNA binding"/>
    <property type="evidence" value="ECO:0007669"/>
    <property type="project" value="UniProtKB-UniRule"/>
</dbReference>
<dbReference type="GO" id="GO:0003735">
    <property type="term" value="F:structural constituent of ribosome"/>
    <property type="evidence" value="ECO:0007669"/>
    <property type="project" value="InterPro"/>
</dbReference>
<dbReference type="GO" id="GO:0006412">
    <property type="term" value="P:translation"/>
    <property type="evidence" value="ECO:0007669"/>
    <property type="project" value="UniProtKB-UniRule"/>
</dbReference>
<dbReference type="CDD" id="cd02412">
    <property type="entry name" value="KH-II_30S_S3"/>
    <property type="match status" value="1"/>
</dbReference>
<dbReference type="Gene3D" id="3.30.300.20">
    <property type="match status" value="1"/>
</dbReference>
<dbReference type="Gene3D" id="3.30.1140.32">
    <property type="entry name" value="Ribosomal protein S3, C-terminal domain"/>
    <property type="match status" value="1"/>
</dbReference>
<dbReference type="HAMAP" id="MF_01309_B">
    <property type="entry name" value="Ribosomal_uS3_B"/>
    <property type="match status" value="1"/>
</dbReference>
<dbReference type="InterPro" id="IPR004087">
    <property type="entry name" value="KH_dom"/>
</dbReference>
<dbReference type="InterPro" id="IPR015946">
    <property type="entry name" value="KH_dom-like_a/b"/>
</dbReference>
<dbReference type="InterPro" id="IPR004044">
    <property type="entry name" value="KH_dom_type_2"/>
</dbReference>
<dbReference type="InterPro" id="IPR009019">
    <property type="entry name" value="KH_sf_prok-type"/>
</dbReference>
<dbReference type="InterPro" id="IPR036419">
    <property type="entry name" value="Ribosomal_S3_C_sf"/>
</dbReference>
<dbReference type="InterPro" id="IPR005704">
    <property type="entry name" value="Ribosomal_uS3_bac-typ"/>
</dbReference>
<dbReference type="InterPro" id="IPR001351">
    <property type="entry name" value="Ribosomal_uS3_C"/>
</dbReference>
<dbReference type="InterPro" id="IPR018280">
    <property type="entry name" value="Ribosomal_uS3_CS"/>
</dbReference>
<dbReference type="NCBIfam" id="TIGR01009">
    <property type="entry name" value="rpsC_bact"/>
    <property type="match status" value="1"/>
</dbReference>
<dbReference type="PANTHER" id="PTHR11760">
    <property type="entry name" value="30S/40S RIBOSOMAL PROTEIN S3"/>
    <property type="match status" value="1"/>
</dbReference>
<dbReference type="PANTHER" id="PTHR11760:SF19">
    <property type="entry name" value="SMALL RIBOSOMAL SUBUNIT PROTEIN US3C"/>
    <property type="match status" value="1"/>
</dbReference>
<dbReference type="Pfam" id="PF07650">
    <property type="entry name" value="KH_2"/>
    <property type="match status" value="1"/>
</dbReference>
<dbReference type="Pfam" id="PF00189">
    <property type="entry name" value="Ribosomal_S3_C"/>
    <property type="match status" value="1"/>
</dbReference>
<dbReference type="SMART" id="SM00322">
    <property type="entry name" value="KH"/>
    <property type="match status" value="1"/>
</dbReference>
<dbReference type="SUPFAM" id="SSF54814">
    <property type="entry name" value="Prokaryotic type KH domain (KH-domain type II)"/>
    <property type="match status" value="1"/>
</dbReference>
<dbReference type="SUPFAM" id="SSF54821">
    <property type="entry name" value="Ribosomal protein S3 C-terminal domain"/>
    <property type="match status" value="1"/>
</dbReference>
<dbReference type="PROSITE" id="PS50823">
    <property type="entry name" value="KH_TYPE_2"/>
    <property type="match status" value="1"/>
</dbReference>
<dbReference type="PROSITE" id="PS00548">
    <property type="entry name" value="RIBOSOMAL_S3"/>
    <property type="match status" value="1"/>
</dbReference>
<protein>
    <recommendedName>
        <fullName evidence="1">Small ribosomal subunit protein uS3</fullName>
    </recommendedName>
    <alternativeName>
        <fullName evidence="2">30S ribosomal protein S3</fullName>
    </alternativeName>
</protein>
<evidence type="ECO:0000255" key="1">
    <source>
        <dbReference type="HAMAP-Rule" id="MF_01309"/>
    </source>
</evidence>
<evidence type="ECO:0000305" key="2"/>
<keyword id="KW-0687">Ribonucleoprotein</keyword>
<keyword id="KW-0689">Ribosomal protein</keyword>
<keyword id="KW-0694">RNA-binding</keyword>
<keyword id="KW-0699">rRNA-binding</keyword>
<reference key="1">
    <citation type="journal article" date="2004" name="J. Bacteriol.">
        <title>The genome sequence of Mycoplasma hyopneumoniae strain 232, the agent of swine mycoplasmosis.</title>
        <authorList>
            <person name="Minion F.C."/>
            <person name="Lefkowitz E.J."/>
            <person name="Madsen M.L."/>
            <person name="Cleary B.J."/>
            <person name="Swartzell S.M."/>
            <person name="Mahairas G.G."/>
        </authorList>
    </citation>
    <scope>NUCLEOTIDE SEQUENCE [LARGE SCALE GENOMIC DNA]</scope>
    <source>
        <strain>232</strain>
    </source>
</reference>
<comment type="function">
    <text evidence="1">Binds the lower part of the 30S subunit head. Binds mRNA in the 70S ribosome, positioning it for translation.</text>
</comment>
<comment type="subunit">
    <text evidence="1">Part of the 30S ribosomal subunit. Forms a tight complex with proteins S10 and S14.</text>
</comment>
<comment type="similarity">
    <text evidence="1">Belongs to the universal ribosomal protein uS3 family.</text>
</comment>
<proteinExistence type="inferred from homology"/>
<name>RS3_MESH2</name>
<sequence>MGQKVNPNGFRFGITRNHNAIWYADKNKFSINLLEDVKIHRFFEKLTREYQIGNTVIRRDRNNAITVLVYTAKLGSFLGASGENLKKIVEKLRKTLKNRKIVINVDAVDIQSPELNAKLMAELIAEKLEQRKSYRIAQKFAIRTALKNGATGVKTIVCGRLNGVEMARCEGYAEGEMKLHTLRQNVEYATAIAKTTYGILGVKVWVSLGEIKEKTDIDAIIRADKRR</sequence>
<gene>
    <name evidence="1" type="primary">rpsC</name>
    <name evidence="1" type="synonym">rps3</name>
    <name type="ordered locus">mhp194</name>
</gene>
<organism>
    <name type="scientific">Mesomycoplasma hyopneumoniae (strain 232)</name>
    <name type="common">Mycoplasma hyopneumoniae</name>
    <dbReference type="NCBI Taxonomy" id="295358"/>
    <lineage>
        <taxon>Bacteria</taxon>
        <taxon>Bacillati</taxon>
        <taxon>Mycoplasmatota</taxon>
        <taxon>Mycoplasmoidales</taxon>
        <taxon>Metamycoplasmataceae</taxon>
        <taxon>Mesomycoplasma</taxon>
    </lineage>
</organism>
<feature type="chain" id="PRO_0000130151" description="Small ribosomal subunit protein uS3">
    <location>
        <begin position="1"/>
        <end position="227"/>
    </location>
</feature>
<feature type="domain" description="KH type-2" evidence="1">
    <location>
        <begin position="39"/>
        <end position="109"/>
    </location>
</feature>